<protein>
    <recommendedName>
        <fullName evidence="1">ATP-dependent protease subunit HslV</fullName>
        <ecNumber evidence="1">3.4.25.2</ecNumber>
    </recommendedName>
</protein>
<gene>
    <name evidence="1" type="primary">hslV</name>
    <name type="ordered locus">XCV0692</name>
</gene>
<name>HSLV_XANE5</name>
<dbReference type="EC" id="3.4.25.2" evidence="1"/>
<dbReference type="EMBL" id="AM039952">
    <property type="protein sequence ID" value="CAJ22323.1"/>
    <property type="molecule type" value="Genomic_DNA"/>
</dbReference>
<dbReference type="RefSeq" id="WP_005997221.1">
    <property type="nucleotide sequence ID" value="NZ_CP017190.1"/>
</dbReference>
<dbReference type="SMR" id="Q3BXU0"/>
<dbReference type="STRING" id="456327.BJD11_19360"/>
<dbReference type="MEROPS" id="T01.006"/>
<dbReference type="GeneID" id="97509027"/>
<dbReference type="KEGG" id="xcv:XCV0692"/>
<dbReference type="eggNOG" id="COG5405">
    <property type="taxonomic scope" value="Bacteria"/>
</dbReference>
<dbReference type="HOGENOM" id="CLU_093872_1_0_6"/>
<dbReference type="Proteomes" id="UP000007069">
    <property type="component" value="Chromosome"/>
</dbReference>
<dbReference type="GO" id="GO:0009376">
    <property type="term" value="C:HslUV protease complex"/>
    <property type="evidence" value="ECO:0007669"/>
    <property type="project" value="UniProtKB-UniRule"/>
</dbReference>
<dbReference type="GO" id="GO:0005839">
    <property type="term" value="C:proteasome core complex"/>
    <property type="evidence" value="ECO:0007669"/>
    <property type="project" value="InterPro"/>
</dbReference>
<dbReference type="GO" id="GO:0046872">
    <property type="term" value="F:metal ion binding"/>
    <property type="evidence" value="ECO:0007669"/>
    <property type="project" value="UniProtKB-KW"/>
</dbReference>
<dbReference type="GO" id="GO:0004298">
    <property type="term" value="F:threonine-type endopeptidase activity"/>
    <property type="evidence" value="ECO:0007669"/>
    <property type="project" value="UniProtKB-KW"/>
</dbReference>
<dbReference type="GO" id="GO:0051603">
    <property type="term" value="P:proteolysis involved in protein catabolic process"/>
    <property type="evidence" value="ECO:0007669"/>
    <property type="project" value="InterPro"/>
</dbReference>
<dbReference type="FunFam" id="3.60.20.10:FF:000002">
    <property type="entry name" value="ATP-dependent protease subunit HslV"/>
    <property type="match status" value="1"/>
</dbReference>
<dbReference type="Gene3D" id="3.60.20.10">
    <property type="entry name" value="Glutamine Phosphoribosylpyrophosphate, subunit 1, domain 1"/>
    <property type="match status" value="1"/>
</dbReference>
<dbReference type="HAMAP" id="MF_00248">
    <property type="entry name" value="HslV"/>
    <property type="match status" value="1"/>
</dbReference>
<dbReference type="InterPro" id="IPR022281">
    <property type="entry name" value="ATP-dep_Prtase_HsIV_su"/>
</dbReference>
<dbReference type="InterPro" id="IPR029055">
    <property type="entry name" value="Ntn_hydrolases_N"/>
</dbReference>
<dbReference type="InterPro" id="IPR001353">
    <property type="entry name" value="Proteasome_sua/b"/>
</dbReference>
<dbReference type="InterPro" id="IPR023333">
    <property type="entry name" value="Proteasome_suB-type"/>
</dbReference>
<dbReference type="NCBIfam" id="TIGR03692">
    <property type="entry name" value="ATP_dep_HslV"/>
    <property type="match status" value="1"/>
</dbReference>
<dbReference type="NCBIfam" id="NF003964">
    <property type="entry name" value="PRK05456.1"/>
    <property type="match status" value="1"/>
</dbReference>
<dbReference type="PANTHER" id="PTHR32194:SF0">
    <property type="entry name" value="ATP-DEPENDENT PROTEASE SUBUNIT HSLV"/>
    <property type="match status" value="1"/>
</dbReference>
<dbReference type="PANTHER" id="PTHR32194">
    <property type="entry name" value="METALLOPROTEASE TLDD"/>
    <property type="match status" value="1"/>
</dbReference>
<dbReference type="Pfam" id="PF00227">
    <property type="entry name" value="Proteasome"/>
    <property type="match status" value="1"/>
</dbReference>
<dbReference type="PIRSF" id="PIRSF039093">
    <property type="entry name" value="HslV"/>
    <property type="match status" value="1"/>
</dbReference>
<dbReference type="SUPFAM" id="SSF56235">
    <property type="entry name" value="N-terminal nucleophile aminohydrolases (Ntn hydrolases)"/>
    <property type="match status" value="1"/>
</dbReference>
<dbReference type="PROSITE" id="PS51476">
    <property type="entry name" value="PROTEASOME_BETA_2"/>
    <property type="match status" value="1"/>
</dbReference>
<reference key="1">
    <citation type="journal article" date="2005" name="J. Bacteriol.">
        <title>Insights into genome plasticity and pathogenicity of the plant pathogenic Bacterium Xanthomonas campestris pv. vesicatoria revealed by the complete genome sequence.</title>
        <authorList>
            <person name="Thieme F."/>
            <person name="Koebnik R."/>
            <person name="Bekel T."/>
            <person name="Berger C."/>
            <person name="Boch J."/>
            <person name="Buettner D."/>
            <person name="Caldana C."/>
            <person name="Gaigalat L."/>
            <person name="Goesmann A."/>
            <person name="Kay S."/>
            <person name="Kirchner O."/>
            <person name="Lanz C."/>
            <person name="Linke B."/>
            <person name="McHardy A.C."/>
            <person name="Meyer F."/>
            <person name="Mittenhuber G."/>
            <person name="Nies D.H."/>
            <person name="Niesbach-Kloesgen U."/>
            <person name="Patschkowski T."/>
            <person name="Rueckert C."/>
            <person name="Rupp O."/>
            <person name="Schneiker S."/>
            <person name="Schuster S.C."/>
            <person name="Vorhoelter F.J."/>
            <person name="Weber E."/>
            <person name="Puehler A."/>
            <person name="Bonas U."/>
            <person name="Bartels D."/>
            <person name="Kaiser O."/>
        </authorList>
    </citation>
    <scope>NUCLEOTIDE SEQUENCE [LARGE SCALE GENOMIC DNA]</scope>
    <source>
        <strain>85-10</strain>
    </source>
</reference>
<proteinExistence type="inferred from homology"/>
<organism>
    <name type="scientific">Xanthomonas euvesicatoria pv. vesicatoria (strain 85-10)</name>
    <name type="common">Xanthomonas campestris pv. vesicatoria</name>
    <dbReference type="NCBI Taxonomy" id="316273"/>
    <lineage>
        <taxon>Bacteria</taxon>
        <taxon>Pseudomonadati</taxon>
        <taxon>Pseudomonadota</taxon>
        <taxon>Gammaproteobacteria</taxon>
        <taxon>Lysobacterales</taxon>
        <taxon>Lysobacteraceae</taxon>
        <taxon>Xanthomonas</taxon>
    </lineage>
</organism>
<evidence type="ECO:0000255" key="1">
    <source>
        <dbReference type="HAMAP-Rule" id="MF_00248"/>
    </source>
</evidence>
<keyword id="KW-0021">Allosteric enzyme</keyword>
<keyword id="KW-0963">Cytoplasm</keyword>
<keyword id="KW-0378">Hydrolase</keyword>
<keyword id="KW-0479">Metal-binding</keyword>
<keyword id="KW-0645">Protease</keyword>
<keyword id="KW-0915">Sodium</keyword>
<keyword id="KW-0888">Threonine protease</keyword>
<comment type="function">
    <text evidence="1">Protease subunit of a proteasome-like degradation complex believed to be a general protein degrading machinery.</text>
</comment>
<comment type="catalytic activity">
    <reaction evidence="1">
        <text>ATP-dependent cleavage of peptide bonds with broad specificity.</text>
        <dbReference type="EC" id="3.4.25.2"/>
    </reaction>
</comment>
<comment type="activity regulation">
    <text evidence="1">Allosterically activated by HslU binding.</text>
</comment>
<comment type="subunit">
    <text evidence="1">A double ring-shaped homohexamer of HslV is capped on each side by a ring-shaped HslU homohexamer. The assembly of the HslU/HslV complex is dependent on binding of ATP.</text>
</comment>
<comment type="subcellular location">
    <subcellularLocation>
        <location evidence="1">Cytoplasm</location>
    </subcellularLocation>
</comment>
<comment type="similarity">
    <text evidence="1">Belongs to the peptidase T1B family. HslV subfamily.</text>
</comment>
<feature type="chain" id="PRO_1000078435" description="ATP-dependent protease subunit HslV">
    <location>
        <begin position="1"/>
        <end position="183"/>
    </location>
</feature>
<feature type="active site" evidence="1">
    <location>
        <position position="13"/>
    </location>
</feature>
<feature type="binding site" evidence="1">
    <location>
        <position position="168"/>
    </location>
    <ligand>
        <name>Na(+)</name>
        <dbReference type="ChEBI" id="CHEBI:29101"/>
    </ligand>
</feature>
<feature type="binding site" evidence="1">
    <location>
        <position position="171"/>
    </location>
    <ligand>
        <name>Na(+)</name>
        <dbReference type="ChEBI" id="CHEBI:29101"/>
    </ligand>
</feature>
<feature type="binding site" evidence="1">
    <location>
        <position position="174"/>
    </location>
    <ligand>
        <name>Na(+)</name>
        <dbReference type="ChEBI" id="CHEBI:29101"/>
    </ligand>
</feature>
<accession>Q3BXU0</accession>
<sequence>MDPSQNPNIVHATTIISVRRGGHVAVAGDGQVTLGHTVMKGNARKVRRLGREGQVLAGFAGAAADAFTLFELFEAKLDKHGQLTRAAVELAKDWRTERRLGKLEALLAVADKETSLIISGTGDVIEPEDGIIAIGSGGSYALSAARALLAHTELDAKTIATEAINIAGDICIYTNRNVVVEEL</sequence>